<feature type="chain" id="PRO_1000019007" description="1-deoxy-D-xylulose-5-phosphate synthase">
    <location>
        <begin position="1"/>
        <end position="619"/>
    </location>
</feature>
<feature type="binding site" evidence="1">
    <location>
        <position position="76"/>
    </location>
    <ligand>
        <name>thiamine diphosphate</name>
        <dbReference type="ChEBI" id="CHEBI:58937"/>
    </ligand>
</feature>
<feature type="binding site" evidence="1">
    <location>
        <begin position="117"/>
        <end position="119"/>
    </location>
    <ligand>
        <name>thiamine diphosphate</name>
        <dbReference type="ChEBI" id="CHEBI:58937"/>
    </ligand>
</feature>
<feature type="binding site" evidence="1">
    <location>
        <position position="148"/>
    </location>
    <ligand>
        <name>Mg(2+)</name>
        <dbReference type="ChEBI" id="CHEBI:18420"/>
    </ligand>
</feature>
<feature type="binding site" evidence="1">
    <location>
        <begin position="149"/>
        <end position="150"/>
    </location>
    <ligand>
        <name>thiamine diphosphate</name>
        <dbReference type="ChEBI" id="CHEBI:58937"/>
    </ligand>
</feature>
<feature type="binding site" evidence="1">
    <location>
        <position position="177"/>
    </location>
    <ligand>
        <name>Mg(2+)</name>
        <dbReference type="ChEBI" id="CHEBI:18420"/>
    </ligand>
</feature>
<feature type="binding site" evidence="1">
    <location>
        <position position="177"/>
    </location>
    <ligand>
        <name>thiamine diphosphate</name>
        <dbReference type="ChEBI" id="CHEBI:58937"/>
    </ligand>
</feature>
<feature type="binding site" evidence="1">
    <location>
        <position position="284"/>
    </location>
    <ligand>
        <name>thiamine diphosphate</name>
        <dbReference type="ChEBI" id="CHEBI:58937"/>
    </ligand>
</feature>
<feature type="binding site" evidence="1">
    <location>
        <position position="366"/>
    </location>
    <ligand>
        <name>thiamine diphosphate</name>
        <dbReference type="ChEBI" id="CHEBI:58937"/>
    </ligand>
</feature>
<proteinExistence type="inferred from homology"/>
<evidence type="ECO:0000255" key="1">
    <source>
        <dbReference type="HAMAP-Rule" id="MF_00315"/>
    </source>
</evidence>
<accession>A1K4R0</accession>
<name>DXS_AZOSB</name>
<reference key="1">
    <citation type="journal article" date="2006" name="Nat. Biotechnol.">
        <title>Complete genome of the mutualistic, N2-fixing grass endophyte Azoarcus sp. strain BH72.</title>
        <authorList>
            <person name="Krause A."/>
            <person name="Ramakumar A."/>
            <person name="Bartels D."/>
            <person name="Battistoni F."/>
            <person name="Bekel T."/>
            <person name="Boch J."/>
            <person name="Boehm M."/>
            <person name="Friedrich F."/>
            <person name="Hurek T."/>
            <person name="Krause L."/>
            <person name="Linke B."/>
            <person name="McHardy A.C."/>
            <person name="Sarkar A."/>
            <person name="Schneiker S."/>
            <person name="Syed A.A."/>
            <person name="Thauer R."/>
            <person name="Vorhoelter F.-J."/>
            <person name="Weidner S."/>
            <person name="Puehler A."/>
            <person name="Reinhold-Hurek B."/>
            <person name="Kaiser O."/>
            <person name="Goesmann A."/>
        </authorList>
    </citation>
    <scope>NUCLEOTIDE SEQUENCE [LARGE SCALE GENOMIC DNA]</scope>
    <source>
        <strain>BH72</strain>
    </source>
</reference>
<dbReference type="EC" id="2.2.1.7" evidence="1"/>
<dbReference type="EMBL" id="AM406670">
    <property type="protein sequence ID" value="CAL93815.1"/>
    <property type="molecule type" value="Genomic_DNA"/>
</dbReference>
<dbReference type="RefSeq" id="WP_011764931.1">
    <property type="nucleotide sequence ID" value="NC_008702.1"/>
</dbReference>
<dbReference type="SMR" id="A1K4R0"/>
<dbReference type="STRING" id="62928.azo1198"/>
<dbReference type="KEGG" id="azo:azo1198"/>
<dbReference type="eggNOG" id="COG1154">
    <property type="taxonomic scope" value="Bacteria"/>
</dbReference>
<dbReference type="HOGENOM" id="CLU_009227_1_4_4"/>
<dbReference type="UniPathway" id="UPA00064">
    <property type="reaction ID" value="UER00091"/>
</dbReference>
<dbReference type="Proteomes" id="UP000002588">
    <property type="component" value="Chromosome"/>
</dbReference>
<dbReference type="GO" id="GO:0005829">
    <property type="term" value="C:cytosol"/>
    <property type="evidence" value="ECO:0007669"/>
    <property type="project" value="TreeGrafter"/>
</dbReference>
<dbReference type="GO" id="GO:0008661">
    <property type="term" value="F:1-deoxy-D-xylulose-5-phosphate synthase activity"/>
    <property type="evidence" value="ECO:0007669"/>
    <property type="project" value="UniProtKB-UniRule"/>
</dbReference>
<dbReference type="GO" id="GO:0000287">
    <property type="term" value="F:magnesium ion binding"/>
    <property type="evidence" value="ECO:0007669"/>
    <property type="project" value="UniProtKB-UniRule"/>
</dbReference>
<dbReference type="GO" id="GO:0030976">
    <property type="term" value="F:thiamine pyrophosphate binding"/>
    <property type="evidence" value="ECO:0007669"/>
    <property type="project" value="UniProtKB-UniRule"/>
</dbReference>
<dbReference type="GO" id="GO:0052865">
    <property type="term" value="P:1-deoxy-D-xylulose 5-phosphate biosynthetic process"/>
    <property type="evidence" value="ECO:0007669"/>
    <property type="project" value="UniProtKB-UniPathway"/>
</dbReference>
<dbReference type="GO" id="GO:0019288">
    <property type="term" value="P:isopentenyl diphosphate biosynthetic process, methylerythritol 4-phosphate pathway"/>
    <property type="evidence" value="ECO:0007669"/>
    <property type="project" value="TreeGrafter"/>
</dbReference>
<dbReference type="GO" id="GO:0016114">
    <property type="term" value="P:terpenoid biosynthetic process"/>
    <property type="evidence" value="ECO:0007669"/>
    <property type="project" value="UniProtKB-UniRule"/>
</dbReference>
<dbReference type="GO" id="GO:0009228">
    <property type="term" value="P:thiamine biosynthetic process"/>
    <property type="evidence" value="ECO:0007669"/>
    <property type="project" value="UniProtKB-UniRule"/>
</dbReference>
<dbReference type="CDD" id="cd02007">
    <property type="entry name" value="TPP_DXS"/>
    <property type="match status" value="1"/>
</dbReference>
<dbReference type="CDD" id="cd07033">
    <property type="entry name" value="TPP_PYR_DXS_TK_like"/>
    <property type="match status" value="1"/>
</dbReference>
<dbReference type="FunFam" id="3.40.50.920:FF:000002">
    <property type="entry name" value="1-deoxy-D-xylulose-5-phosphate synthase"/>
    <property type="match status" value="1"/>
</dbReference>
<dbReference type="FunFam" id="3.40.50.970:FF:000005">
    <property type="entry name" value="1-deoxy-D-xylulose-5-phosphate synthase"/>
    <property type="match status" value="1"/>
</dbReference>
<dbReference type="Gene3D" id="3.40.50.920">
    <property type="match status" value="1"/>
</dbReference>
<dbReference type="Gene3D" id="3.40.50.970">
    <property type="match status" value="2"/>
</dbReference>
<dbReference type="HAMAP" id="MF_00315">
    <property type="entry name" value="DXP_synth"/>
    <property type="match status" value="1"/>
</dbReference>
<dbReference type="InterPro" id="IPR005477">
    <property type="entry name" value="Dxylulose-5-P_synthase"/>
</dbReference>
<dbReference type="InterPro" id="IPR029061">
    <property type="entry name" value="THDP-binding"/>
</dbReference>
<dbReference type="InterPro" id="IPR009014">
    <property type="entry name" value="Transketo_C/PFOR_II"/>
</dbReference>
<dbReference type="InterPro" id="IPR005475">
    <property type="entry name" value="Transketolase-like_Pyr-bd"/>
</dbReference>
<dbReference type="InterPro" id="IPR020826">
    <property type="entry name" value="Transketolase_BS"/>
</dbReference>
<dbReference type="InterPro" id="IPR033248">
    <property type="entry name" value="Transketolase_C"/>
</dbReference>
<dbReference type="InterPro" id="IPR049557">
    <property type="entry name" value="Transketolase_CS"/>
</dbReference>
<dbReference type="NCBIfam" id="TIGR00204">
    <property type="entry name" value="dxs"/>
    <property type="match status" value="1"/>
</dbReference>
<dbReference type="NCBIfam" id="NF003933">
    <property type="entry name" value="PRK05444.2-2"/>
    <property type="match status" value="1"/>
</dbReference>
<dbReference type="PANTHER" id="PTHR43322">
    <property type="entry name" value="1-D-DEOXYXYLULOSE 5-PHOSPHATE SYNTHASE-RELATED"/>
    <property type="match status" value="1"/>
</dbReference>
<dbReference type="PANTHER" id="PTHR43322:SF5">
    <property type="entry name" value="1-DEOXY-D-XYLULOSE-5-PHOSPHATE SYNTHASE, CHLOROPLASTIC"/>
    <property type="match status" value="1"/>
</dbReference>
<dbReference type="Pfam" id="PF13292">
    <property type="entry name" value="DXP_synthase_N"/>
    <property type="match status" value="1"/>
</dbReference>
<dbReference type="Pfam" id="PF02779">
    <property type="entry name" value="Transket_pyr"/>
    <property type="match status" value="1"/>
</dbReference>
<dbReference type="Pfam" id="PF02780">
    <property type="entry name" value="Transketolase_C"/>
    <property type="match status" value="1"/>
</dbReference>
<dbReference type="SMART" id="SM00861">
    <property type="entry name" value="Transket_pyr"/>
    <property type="match status" value="1"/>
</dbReference>
<dbReference type="SUPFAM" id="SSF52518">
    <property type="entry name" value="Thiamin diphosphate-binding fold (THDP-binding)"/>
    <property type="match status" value="2"/>
</dbReference>
<dbReference type="SUPFAM" id="SSF52922">
    <property type="entry name" value="TK C-terminal domain-like"/>
    <property type="match status" value="1"/>
</dbReference>
<dbReference type="PROSITE" id="PS00801">
    <property type="entry name" value="TRANSKETOLASE_1"/>
    <property type="match status" value="1"/>
</dbReference>
<dbReference type="PROSITE" id="PS00802">
    <property type="entry name" value="TRANSKETOLASE_2"/>
    <property type="match status" value="1"/>
</dbReference>
<protein>
    <recommendedName>
        <fullName evidence="1">1-deoxy-D-xylulose-5-phosphate synthase</fullName>
        <ecNumber evidence="1">2.2.1.7</ecNumber>
    </recommendedName>
    <alternativeName>
        <fullName evidence="1">1-deoxyxylulose-5-phosphate synthase</fullName>
        <shortName evidence="1">DXP synthase</shortName>
        <shortName evidence="1">DXPS</shortName>
    </alternativeName>
</protein>
<comment type="function">
    <text evidence="1">Catalyzes the acyloin condensation reaction between C atoms 2 and 3 of pyruvate and glyceraldehyde 3-phosphate to yield 1-deoxy-D-xylulose-5-phosphate (DXP).</text>
</comment>
<comment type="catalytic activity">
    <reaction evidence="1">
        <text>D-glyceraldehyde 3-phosphate + pyruvate + H(+) = 1-deoxy-D-xylulose 5-phosphate + CO2</text>
        <dbReference type="Rhea" id="RHEA:12605"/>
        <dbReference type="ChEBI" id="CHEBI:15361"/>
        <dbReference type="ChEBI" id="CHEBI:15378"/>
        <dbReference type="ChEBI" id="CHEBI:16526"/>
        <dbReference type="ChEBI" id="CHEBI:57792"/>
        <dbReference type="ChEBI" id="CHEBI:59776"/>
        <dbReference type="EC" id="2.2.1.7"/>
    </reaction>
</comment>
<comment type="cofactor">
    <cofactor evidence="1">
        <name>Mg(2+)</name>
        <dbReference type="ChEBI" id="CHEBI:18420"/>
    </cofactor>
    <text evidence="1">Binds 1 Mg(2+) ion per subunit.</text>
</comment>
<comment type="cofactor">
    <cofactor evidence="1">
        <name>thiamine diphosphate</name>
        <dbReference type="ChEBI" id="CHEBI:58937"/>
    </cofactor>
    <text evidence="1">Binds 1 thiamine pyrophosphate per subunit.</text>
</comment>
<comment type="pathway">
    <text evidence="1">Metabolic intermediate biosynthesis; 1-deoxy-D-xylulose 5-phosphate biosynthesis; 1-deoxy-D-xylulose 5-phosphate from D-glyceraldehyde 3-phosphate and pyruvate: step 1/1.</text>
</comment>
<comment type="subunit">
    <text evidence="1">Homodimer.</text>
</comment>
<comment type="similarity">
    <text evidence="1">Belongs to the transketolase family. DXPS subfamily.</text>
</comment>
<sequence length="619" mass="66358">MSPYPHLERIGSPADLRATERRELAQVASELRAFLIESVSKTGGHLSSNLGTVELTIALHYVFNTPDDRIVWDVGHQTYGHKILTGRREAMSGLRHWGGISGFPRRCESEYDTFGTAHSSTSISAALGMAVAARDRGEDRRAIAVIGDGAMSAGMAFEALNNAGDMDANLLVILNDNEMSISPPVGALTKILARLMSGSTYNAARRVGEKVLGTVPPMAELARKVEEYAKGMIAPGTLFEEFGFHYYGPIDGHDLDALIPTLQNIRKLKGPQFLHVITKKGQGYKLAEADPILYHGVSKFDHTAGIQTGKSGGKLTYTQVFSDWLCDIAAADPRIVGITPAMREGSGLVEFAQRFPDRYYDVGIAEQHALTFAAGLACEGLKPVVAIYSTFLQRAYDQLIHDIALQNLPVVLAIDRGGLVGADGATHHGAFDLSFLACVPNLVVMAPADENECRQMLYTAVCHDGPTAVRYPRGGGSGVVPLEPMTALPIGKGEIRRHGTRIAVLAFGSMLGVALEVGEALDASVANMRFVKPLDEALIAELAANHALLVTVEENAVIGGAGSEVARFVDTLPQRPRVLRLGLPDRFIDHGDQAQLLASVGLDKTGILAAIEAVYPHNS</sequence>
<gene>
    <name evidence="1" type="primary">dxs</name>
    <name type="ordered locus">azo1198</name>
</gene>
<organism>
    <name type="scientific">Azoarcus sp. (strain BH72)</name>
    <dbReference type="NCBI Taxonomy" id="418699"/>
    <lineage>
        <taxon>Bacteria</taxon>
        <taxon>Pseudomonadati</taxon>
        <taxon>Pseudomonadota</taxon>
        <taxon>Betaproteobacteria</taxon>
        <taxon>Rhodocyclales</taxon>
        <taxon>Zoogloeaceae</taxon>
        <taxon>Azoarcus</taxon>
    </lineage>
</organism>
<keyword id="KW-0414">Isoprene biosynthesis</keyword>
<keyword id="KW-0460">Magnesium</keyword>
<keyword id="KW-0479">Metal-binding</keyword>
<keyword id="KW-1185">Reference proteome</keyword>
<keyword id="KW-0784">Thiamine biosynthesis</keyword>
<keyword id="KW-0786">Thiamine pyrophosphate</keyword>
<keyword id="KW-0808">Transferase</keyword>